<comment type="function">
    <text evidence="1">Methylates the class 1 translation termination release factors RF1/PrfA and RF2/PrfB on the glutamine residue of the universally conserved GGQ motif.</text>
</comment>
<comment type="catalytic activity">
    <reaction evidence="1">
        <text>L-glutaminyl-[peptide chain release factor] + S-adenosyl-L-methionine = N(5)-methyl-L-glutaminyl-[peptide chain release factor] + S-adenosyl-L-homocysteine + H(+)</text>
        <dbReference type="Rhea" id="RHEA:42896"/>
        <dbReference type="Rhea" id="RHEA-COMP:10271"/>
        <dbReference type="Rhea" id="RHEA-COMP:10272"/>
        <dbReference type="ChEBI" id="CHEBI:15378"/>
        <dbReference type="ChEBI" id="CHEBI:30011"/>
        <dbReference type="ChEBI" id="CHEBI:57856"/>
        <dbReference type="ChEBI" id="CHEBI:59789"/>
        <dbReference type="ChEBI" id="CHEBI:61891"/>
        <dbReference type="EC" id="2.1.1.297"/>
    </reaction>
</comment>
<comment type="similarity">
    <text evidence="1">Belongs to the protein N5-glutamine methyltransferase family. PrmC subfamily.</text>
</comment>
<sequence>MQHPDSILTLLKKSEEFLKKKEIPSARLDAEILLADLLNLQRVKLYVNFERLLNETEKNAYRERILERSKNKPTAYITSQKAFYNSIFFVNENVLIPRPETEELVEKVLSDFKGNIGEQNVLDLCTGSGCIGISLKLARKDWNITLSDISKEALEVATKNAIQILGEEKHIQFLESDLFLSIPKESKFNLIVTNPPYIPISDKAEMMKDVIDYEPHLALFLENPKDFLSTLIAQAYERLVEGGKLYMEILPSLSETIISDSIAKGWENGKIEKDLSGKERFVILTR</sequence>
<keyword id="KW-0489">Methyltransferase</keyword>
<keyword id="KW-1185">Reference proteome</keyword>
<keyword id="KW-0949">S-adenosyl-L-methionine</keyword>
<keyword id="KW-0808">Transferase</keyword>
<protein>
    <recommendedName>
        <fullName evidence="1">Release factor glutamine methyltransferase</fullName>
        <shortName evidence="1">RF MTase</shortName>
        <ecNumber evidence="1">2.1.1.297</ecNumber>
    </recommendedName>
    <alternativeName>
        <fullName evidence="1">N5-glutamine methyltransferase PrmC</fullName>
    </alternativeName>
    <alternativeName>
        <fullName evidence="1">Protein-(glutamine-N5) MTase PrmC</fullName>
    </alternativeName>
    <alternativeName>
        <fullName evidence="1">Protein-glutamine N-methyltransferase PrmC</fullName>
    </alternativeName>
</protein>
<organism>
    <name type="scientific">Leptospira interrogans serogroup Icterohaemorrhagiae serovar Lai (strain 56601)</name>
    <dbReference type="NCBI Taxonomy" id="189518"/>
    <lineage>
        <taxon>Bacteria</taxon>
        <taxon>Pseudomonadati</taxon>
        <taxon>Spirochaetota</taxon>
        <taxon>Spirochaetia</taxon>
        <taxon>Leptospirales</taxon>
        <taxon>Leptospiraceae</taxon>
        <taxon>Leptospira</taxon>
    </lineage>
</organism>
<feature type="chain" id="PRO_0000414528" description="Release factor glutamine methyltransferase">
    <location>
        <begin position="1"/>
        <end position="286"/>
    </location>
</feature>
<feature type="binding site" evidence="1">
    <location>
        <position position="148"/>
    </location>
    <ligand>
        <name>S-adenosyl-L-methionine</name>
        <dbReference type="ChEBI" id="CHEBI:59789"/>
    </ligand>
</feature>
<feature type="binding site" evidence="1">
    <location>
        <begin position="194"/>
        <end position="197"/>
    </location>
    <ligand>
        <name>substrate</name>
    </ligand>
</feature>
<feature type="binding site" evidence="1">
    <location>
        <position position="194"/>
    </location>
    <ligand>
        <name>S-adenosyl-L-methionine</name>
        <dbReference type="ChEBI" id="CHEBI:59789"/>
    </ligand>
</feature>
<accession>Q8F987</accession>
<reference key="1">
    <citation type="journal article" date="2003" name="Nature">
        <title>Unique physiological and pathogenic features of Leptospira interrogans revealed by whole-genome sequencing.</title>
        <authorList>
            <person name="Ren S.-X."/>
            <person name="Fu G."/>
            <person name="Jiang X.-G."/>
            <person name="Zeng R."/>
            <person name="Miao Y.-G."/>
            <person name="Xu H."/>
            <person name="Zhang Y.-X."/>
            <person name="Xiong H."/>
            <person name="Lu G."/>
            <person name="Lu L.-F."/>
            <person name="Jiang H.-Q."/>
            <person name="Jia J."/>
            <person name="Tu Y.-F."/>
            <person name="Jiang J.-X."/>
            <person name="Gu W.-Y."/>
            <person name="Zhang Y.-Q."/>
            <person name="Cai Z."/>
            <person name="Sheng H.-H."/>
            <person name="Yin H.-F."/>
            <person name="Zhang Y."/>
            <person name="Zhu G.-F."/>
            <person name="Wan M."/>
            <person name="Huang H.-L."/>
            <person name="Qian Z."/>
            <person name="Wang S.-Y."/>
            <person name="Ma W."/>
            <person name="Yao Z.-J."/>
            <person name="Shen Y."/>
            <person name="Qiang B.-Q."/>
            <person name="Xia Q.-C."/>
            <person name="Guo X.-K."/>
            <person name="Danchin A."/>
            <person name="Saint Girons I."/>
            <person name="Somerville R.L."/>
            <person name="Wen Y.-M."/>
            <person name="Shi M.-H."/>
            <person name="Chen Z."/>
            <person name="Xu J.-G."/>
            <person name="Zhao G.-P."/>
        </authorList>
    </citation>
    <scope>NUCLEOTIDE SEQUENCE [LARGE SCALE GENOMIC DNA]</scope>
    <source>
        <strain>56601</strain>
    </source>
</reference>
<gene>
    <name evidence="1" type="primary">prmC</name>
    <name type="synonym">hemK</name>
    <name type="ordered locus">LA_0308</name>
</gene>
<evidence type="ECO:0000255" key="1">
    <source>
        <dbReference type="HAMAP-Rule" id="MF_02126"/>
    </source>
</evidence>
<proteinExistence type="inferred from homology"/>
<dbReference type="EC" id="2.1.1.297" evidence="1"/>
<dbReference type="EMBL" id="AE010300">
    <property type="protein sequence ID" value="AAN47507.1"/>
    <property type="molecule type" value="Genomic_DNA"/>
</dbReference>
<dbReference type="RefSeq" id="NP_710489.1">
    <property type="nucleotide sequence ID" value="NC_004342.2"/>
</dbReference>
<dbReference type="RefSeq" id="WP_001164603.1">
    <property type="nucleotide sequence ID" value="NC_004342.2"/>
</dbReference>
<dbReference type="SMR" id="Q8F987"/>
<dbReference type="FunCoup" id="Q8F987">
    <property type="interactions" value="162"/>
</dbReference>
<dbReference type="STRING" id="189518.LA_0308"/>
<dbReference type="PaxDb" id="189518-LA_0308"/>
<dbReference type="EnsemblBacteria" id="AAN47507">
    <property type="protein sequence ID" value="AAN47507"/>
    <property type="gene ID" value="LA_0308"/>
</dbReference>
<dbReference type="KEGG" id="lil:LA_0308"/>
<dbReference type="PATRIC" id="fig|189518.3.peg.310"/>
<dbReference type="HOGENOM" id="CLU_018398_3_1_12"/>
<dbReference type="InParanoid" id="Q8F987"/>
<dbReference type="OrthoDB" id="9800643at2"/>
<dbReference type="Proteomes" id="UP000001408">
    <property type="component" value="Chromosome I"/>
</dbReference>
<dbReference type="GO" id="GO:0003676">
    <property type="term" value="F:nucleic acid binding"/>
    <property type="evidence" value="ECO:0007669"/>
    <property type="project" value="InterPro"/>
</dbReference>
<dbReference type="GO" id="GO:0102559">
    <property type="term" value="F:protein-(glutamine-N5) methyltransferase activity"/>
    <property type="evidence" value="ECO:0007669"/>
    <property type="project" value="UniProtKB-EC"/>
</dbReference>
<dbReference type="GO" id="GO:0036009">
    <property type="term" value="F:protein-glutamine N-methyltransferase activity"/>
    <property type="evidence" value="ECO:0000318"/>
    <property type="project" value="GO_Central"/>
</dbReference>
<dbReference type="GO" id="GO:0032259">
    <property type="term" value="P:methylation"/>
    <property type="evidence" value="ECO:0007669"/>
    <property type="project" value="UniProtKB-KW"/>
</dbReference>
<dbReference type="GO" id="GO:0006415">
    <property type="term" value="P:translational termination"/>
    <property type="evidence" value="ECO:0000318"/>
    <property type="project" value="GO_Central"/>
</dbReference>
<dbReference type="CDD" id="cd02440">
    <property type="entry name" value="AdoMet_MTases"/>
    <property type="match status" value="1"/>
</dbReference>
<dbReference type="Gene3D" id="1.10.8.10">
    <property type="entry name" value="DNA helicase RuvA subunit, C-terminal domain"/>
    <property type="match status" value="1"/>
</dbReference>
<dbReference type="Gene3D" id="3.40.50.150">
    <property type="entry name" value="Vaccinia Virus protein VP39"/>
    <property type="match status" value="1"/>
</dbReference>
<dbReference type="HAMAP" id="MF_02126">
    <property type="entry name" value="RF_methyltr_PrmC"/>
    <property type="match status" value="1"/>
</dbReference>
<dbReference type="InterPro" id="IPR002052">
    <property type="entry name" value="DNA_methylase_N6_adenine_CS"/>
</dbReference>
<dbReference type="InterPro" id="IPR004556">
    <property type="entry name" value="HemK-like"/>
</dbReference>
<dbReference type="InterPro" id="IPR050320">
    <property type="entry name" value="N5-glutamine_MTase"/>
</dbReference>
<dbReference type="InterPro" id="IPR040758">
    <property type="entry name" value="PrmC_N"/>
</dbReference>
<dbReference type="InterPro" id="IPR019874">
    <property type="entry name" value="RF_methyltr_PrmC"/>
</dbReference>
<dbReference type="InterPro" id="IPR029063">
    <property type="entry name" value="SAM-dependent_MTases_sf"/>
</dbReference>
<dbReference type="InterPro" id="IPR007848">
    <property type="entry name" value="Small_mtfrase_dom"/>
</dbReference>
<dbReference type="NCBIfam" id="TIGR00536">
    <property type="entry name" value="hemK_fam"/>
    <property type="match status" value="1"/>
</dbReference>
<dbReference type="NCBIfam" id="TIGR03534">
    <property type="entry name" value="RF_mod_PrmC"/>
    <property type="match status" value="1"/>
</dbReference>
<dbReference type="PANTHER" id="PTHR18895">
    <property type="entry name" value="HEMK METHYLTRANSFERASE"/>
    <property type="match status" value="1"/>
</dbReference>
<dbReference type="PANTHER" id="PTHR18895:SF74">
    <property type="entry name" value="MTRF1L RELEASE FACTOR GLUTAMINE METHYLTRANSFERASE"/>
    <property type="match status" value="1"/>
</dbReference>
<dbReference type="Pfam" id="PF05175">
    <property type="entry name" value="MTS"/>
    <property type="match status" value="1"/>
</dbReference>
<dbReference type="Pfam" id="PF17827">
    <property type="entry name" value="PrmC_N"/>
    <property type="match status" value="1"/>
</dbReference>
<dbReference type="SUPFAM" id="SSF53335">
    <property type="entry name" value="S-adenosyl-L-methionine-dependent methyltransferases"/>
    <property type="match status" value="1"/>
</dbReference>
<name>PRMC_LEPIN</name>